<name>AAE1_RAUSE</name>
<reference key="1">
    <citation type="journal article" date="2024" name="Nat. Commun.">
        <title>De novo biosynthesis of antiarrhythmic alkaloid ajmaline.</title>
        <authorList>
            <person name="Guo J."/>
            <person name="Gao D."/>
            <person name="Lian J."/>
            <person name="Qu Y."/>
        </authorList>
    </citation>
    <scope>NUCLEOTIDE SEQUENCE [MRNA]</scope>
    <scope>FUNCTION</scope>
    <scope>CATALYTIC ACTIVITY</scope>
    <scope>PATHWAY</scope>
    <scope>TISSUE SPECIFICITY</scope>
    <scope>BIOTECHNOLOGY</scope>
</reference>
<comment type="function">
    <text evidence="2 5">Acetylesterase involved in the biosynthesis of ajmaline-type monoterpenoid indole alkaloids (MIAs) natural products, important plant-derived pharmaceuticals used in the therapy of heart disorders (PubMed:38212296). Deacetylates 17-O-acetylnorajmaline to produce norajmaline (PubMed:38212296). May also catalyze the conversion of 17-O-acetylajmaline to ajmaline (By similarity).</text>
</comment>
<comment type="catalytic activity">
    <reaction evidence="5">
        <text>17-O-acetylnorajmaline + H2O = norajmaline + acetate + H(+)</text>
        <dbReference type="Rhea" id="RHEA:23796"/>
        <dbReference type="ChEBI" id="CHEBI:15377"/>
        <dbReference type="ChEBI" id="CHEBI:15378"/>
        <dbReference type="ChEBI" id="CHEBI:30089"/>
        <dbReference type="ChEBI" id="CHEBI:77618"/>
        <dbReference type="ChEBI" id="CHEBI:77725"/>
        <dbReference type="EC" id="3.1.1.80"/>
    </reaction>
    <physiologicalReaction direction="left-to-right" evidence="5">
        <dbReference type="Rhea" id="RHEA:23797"/>
    </physiologicalReaction>
</comment>
<comment type="catalytic activity">
    <reaction evidence="2">
        <text>17-O-acetylajmaline + H2O = ajmaline + acetate + H(+)</text>
        <dbReference type="Rhea" id="RHEA:22124"/>
        <dbReference type="ChEBI" id="CHEBI:15377"/>
        <dbReference type="ChEBI" id="CHEBI:15378"/>
        <dbReference type="ChEBI" id="CHEBI:30089"/>
        <dbReference type="ChEBI" id="CHEBI:58567"/>
        <dbReference type="ChEBI" id="CHEBI:58679"/>
        <dbReference type="EC" id="3.1.1.80"/>
    </reaction>
    <physiologicalReaction direction="left-to-right" evidence="2">
        <dbReference type="Rhea" id="RHEA:22125"/>
    </physiologicalReaction>
</comment>
<comment type="pathway">
    <text evidence="5">Alkaloid biosynthesis; ajmaline biosynthesis.</text>
</comment>
<comment type="tissue specificity">
    <text evidence="5">Expressed in roots and leaves at low levels.</text>
</comment>
<comment type="biotechnology">
    <text evidence="5">The strictosidine aglycone-producing AJM7-DeltaHYS yeast strain expressing pathway genes of the VOM module, RsGS, SBE (GsSBE, RsSBE1 or RsSBE2), RsPNAE, RsVS and RsVH, accumulates vomilenine (PubMed:38212296). Additionnal expression of pathway genes of the AJM module, RsVR, RsDHVR, AAE (RsAAE1 or RsAAE2) and RsNNMT, leads to the production of ajmaline (PubMed:38212296). Ajmaline is an anti-arrhythmic alkaloid commercially used as an efficient drug for the treatment of arrhythmic heart disorder (PubMed:38212296).</text>
</comment>
<comment type="similarity">
    <text evidence="7">Belongs to the 'GDSL' lipolytic enzyme family.</text>
</comment>
<evidence type="ECO:0000250" key="1">
    <source>
        <dbReference type="UniProtKB" id="Q00017"/>
    </source>
</evidence>
<evidence type="ECO:0000250" key="2">
    <source>
        <dbReference type="UniProtKB" id="Q3MKY2"/>
    </source>
</evidence>
<evidence type="ECO:0000255" key="3"/>
<evidence type="ECO:0000255" key="4">
    <source>
        <dbReference type="PROSITE-ProRule" id="PRU00498"/>
    </source>
</evidence>
<evidence type="ECO:0000269" key="5">
    <source>
    </source>
</evidence>
<evidence type="ECO:0000303" key="6">
    <source>
    </source>
</evidence>
<evidence type="ECO:0000305" key="7"/>
<accession>P0DXJ4</accession>
<organism>
    <name type="scientific">Rauvolfia serpentina</name>
    <name type="common">Serpentine wood</name>
    <name type="synonym">Ophioxylon serpentinum</name>
    <dbReference type="NCBI Taxonomy" id="4060"/>
    <lineage>
        <taxon>Eukaryota</taxon>
        <taxon>Viridiplantae</taxon>
        <taxon>Streptophyta</taxon>
        <taxon>Embryophyta</taxon>
        <taxon>Tracheophyta</taxon>
        <taxon>Spermatophyta</taxon>
        <taxon>Magnoliopsida</taxon>
        <taxon>eudicotyledons</taxon>
        <taxon>Gunneridae</taxon>
        <taxon>Pentapetalae</taxon>
        <taxon>asterids</taxon>
        <taxon>lamiids</taxon>
        <taxon>Gentianales</taxon>
        <taxon>Apocynaceae</taxon>
        <taxon>Rauvolfioideae</taxon>
        <taxon>Vinceae</taxon>
        <taxon>Rauvolfiinae</taxon>
        <taxon>Rauvolfia</taxon>
    </lineage>
</organism>
<gene>
    <name evidence="6" type="primary">AAE1</name>
</gene>
<sequence length="379" mass="41973">MGFAPLLVFSLFVFAGTTKGFICSFDSIYQLGDSFSDTGNLIRQPPDGPTFCSAHFPYGETFPGMPTGRCSDGRLIIDFIATALNLPLLNPYLQQNVSFRHGVNFAVGGATALDLSFLAARGVQVYDVHSPLSTQLKWFRTYLGSICSSPKECSNKLKNALFILGNIGNNDVNYAFPNRSIEEIRAYLPFITEAVANATREIIRLGGTRVIVPGMFPLGCLARNLYFFPDGDKDDLGCLSSLNDLSIYFNSLIQQALASLRIEFPQAVIIYADYYNAWGFLFRNGPALGFNSTTMLKCCCGIGGPYNYDPDRECASQGVPVCSNPTEYIQWDGTHFTQAAYRRVAEYIIPDIIKELKCSYSSIQHLTEGREALHINERE</sequence>
<feature type="signal peptide" evidence="3">
    <location>
        <begin position="1"/>
        <end position="20"/>
    </location>
</feature>
<feature type="chain" id="PRO_0000462318" description="Acetylajmalan esterase 1">
    <location>
        <begin position="21"/>
        <end position="379"/>
    </location>
</feature>
<feature type="active site" description="Nucleophile" evidence="1">
    <location>
        <position position="34"/>
    </location>
</feature>
<feature type="active site" evidence="1">
    <location>
        <position position="332"/>
    </location>
</feature>
<feature type="active site" evidence="1">
    <location>
        <position position="335"/>
    </location>
</feature>
<feature type="glycosylation site" description="N-linked (GlcNAc...) asparagine" evidence="4">
    <location>
        <position position="96"/>
    </location>
</feature>
<feature type="glycosylation site" description="N-linked (GlcNAc...) asparagine" evidence="4">
    <location>
        <position position="178"/>
    </location>
</feature>
<feature type="glycosylation site" description="N-linked (GlcNAc...) asparagine" evidence="4">
    <location>
        <position position="197"/>
    </location>
</feature>
<feature type="glycosylation site" description="N-linked (GlcNAc...) asparagine" evidence="4">
    <location>
        <position position="291"/>
    </location>
</feature>
<dbReference type="EC" id="3.1.1.80" evidence="5"/>
<dbReference type="EMBL" id="OQ591892">
    <property type="protein sequence ID" value="WKU61928.1"/>
    <property type="molecule type" value="mRNA"/>
</dbReference>
<dbReference type="UniPathway" id="UPA00310"/>
<protein>
    <recommendedName>
        <fullName evidence="6">Acetylajmalan esterase 1</fullName>
        <shortName evidence="6">RsAAE1</shortName>
        <ecNumber evidence="5">3.1.1.80</ecNumber>
    </recommendedName>
</protein>
<proteinExistence type="evidence at protein level"/>
<keyword id="KW-0017">Alkaloid metabolism</keyword>
<keyword id="KW-0325">Glycoprotein</keyword>
<keyword id="KW-0378">Hydrolase</keyword>
<keyword id="KW-0732">Signal</keyword>